<keyword id="KW-0131">Cell cycle</keyword>
<keyword id="KW-0132">Cell division</keyword>
<keyword id="KW-0997">Cell inner membrane</keyword>
<keyword id="KW-1003">Cell membrane</keyword>
<keyword id="KW-0133">Cell shape</keyword>
<keyword id="KW-0961">Cell wall biogenesis/degradation</keyword>
<keyword id="KW-0460">Magnesium</keyword>
<keyword id="KW-0472">Membrane</keyword>
<keyword id="KW-0479">Metal-binding</keyword>
<keyword id="KW-0573">Peptidoglycan synthesis</keyword>
<keyword id="KW-0808">Transferase</keyword>
<keyword id="KW-0812">Transmembrane</keyword>
<keyword id="KW-1133">Transmembrane helix</keyword>
<name>MRAY_BORPA</name>
<reference key="1">
    <citation type="journal article" date="2003" name="Nat. Genet.">
        <title>Comparative analysis of the genome sequences of Bordetella pertussis, Bordetella parapertussis and Bordetella bronchiseptica.</title>
        <authorList>
            <person name="Parkhill J."/>
            <person name="Sebaihia M."/>
            <person name="Preston A."/>
            <person name="Murphy L.D."/>
            <person name="Thomson N.R."/>
            <person name="Harris D.E."/>
            <person name="Holden M.T.G."/>
            <person name="Churcher C.M."/>
            <person name="Bentley S.D."/>
            <person name="Mungall K.L."/>
            <person name="Cerdeno-Tarraga A.-M."/>
            <person name="Temple L."/>
            <person name="James K.D."/>
            <person name="Harris B."/>
            <person name="Quail M.A."/>
            <person name="Achtman M."/>
            <person name="Atkin R."/>
            <person name="Baker S."/>
            <person name="Basham D."/>
            <person name="Bason N."/>
            <person name="Cherevach I."/>
            <person name="Chillingworth T."/>
            <person name="Collins M."/>
            <person name="Cronin A."/>
            <person name="Davis P."/>
            <person name="Doggett J."/>
            <person name="Feltwell T."/>
            <person name="Goble A."/>
            <person name="Hamlin N."/>
            <person name="Hauser H."/>
            <person name="Holroyd S."/>
            <person name="Jagels K."/>
            <person name="Leather S."/>
            <person name="Moule S."/>
            <person name="Norberczak H."/>
            <person name="O'Neil S."/>
            <person name="Ormond D."/>
            <person name="Price C."/>
            <person name="Rabbinowitsch E."/>
            <person name="Rutter S."/>
            <person name="Sanders M."/>
            <person name="Saunders D."/>
            <person name="Seeger K."/>
            <person name="Sharp S."/>
            <person name="Simmonds M."/>
            <person name="Skelton J."/>
            <person name="Squares R."/>
            <person name="Squares S."/>
            <person name="Stevens K."/>
            <person name="Unwin L."/>
            <person name="Whitehead S."/>
            <person name="Barrell B.G."/>
            <person name="Maskell D.J."/>
        </authorList>
    </citation>
    <scope>NUCLEOTIDE SEQUENCE [LARGE SCALE GENOMIC DNA]</scope>
    <source>
        <strain>12822 / ATCC BAA-587 / NCTC 13253</strain>
    </source>
</reference>
<feature type="chain" id="PRO_0000108792" description="Phospho-N-acetylmuramoyl-pentapeptide-transferase">
    <location>
        <begin position="1"/>
        <end position="377"/>
    </location>
</feature>
<feature type="transmembrane region" description="Helical" evidence="1">
    <location>
        <begin position="9"/>
        <end position="29"/>
    </location>
</feature>
<feature type="transmembrane region" description="Helical" evidence="1">
    <location>
        <begin position="62"/>
        <end position="82"/>
    </location>
</feature>
<feature type="transmembrane region" description="Helical" evidence="1">
    <location>
        <begin position="85"/>
        <end position="105"/>
    </location>
</feature>
<feature type="transmembrane region" description="Helical" evidence="1">
    <location>
        <begin position="122"/>
        <end position="142"/>
    </location>
</feature>
<feature type="transmembrane region" description="Helical" evidence="1">
    <location>
        <begin position="155"/>
        <end position="175"/>
    </location>
</feature>
<feature type="transmembrane region" description="Helical" evidence="1">
    <location>
        <begin position="178"/>
        <end position="198"/>
    </location>
</feature>
<feature type="transmembrane region" description="Helical" evidence="1">
    <location>
        <begin position="210"/>
        <end position="230"/>
    </location>
</feature>
<feature type="transmembrane region" description="Helical" evidence="1">
    <location>
        <begin position="247"/>
        <end position="267"/>
    </location>
</feature>
<feature type="transmembrane region" description="Helical" evidence="1">
    <location>
        <begin position="274"/>
        <end position="294"/>
    </location>
</feature>
<feature type="transmembrane region" description="Helical" evidence="1">
    <location>
        <begin position="299"/>
        <end position="319"/>
    </location>
</feature>
<feature type="transmembrane region" description="Helical" evidence="1">
    <location>
        <begin position="354"/>
        <end position="374"/>
    </location>
</feature>
<evidence type="ECO:0000255" key="1">
    <source>
        <dbReference type="HAMAP-Rule" id="MF_00038"/>
    </source>
</evidence>
<accession>Q7W4B1</accession>
<organism>
    <name type="scientific">Bordetella parapertussis (strain 12822 / ATCC BAA-587 / NCTC 13253)</name>
    <dbReference type="NCBI Taxonomy" id="257311"/>
    <lineage>
        <taxon>Bacteria</taxon>
        <taxon>Pseudomonadati</taxon>
        <taxon>Pseudomonadota</taxon>
        <taxon>Betaproteobacteria</taxon>
        <taxon>Burkholderiales</taxon>
        <taxon>Alcaligenaceae</taxon>
        <taxon>Bordetella</taxon>
    </lineage>
</organism>
<protein>
    <recommendedName>
        <fullName evidence="1">Phospho-N-acetylmuramoyl-pentapeptide-transferase</fullName>
        <ecNumber evidence="1">2.7.8.13</ecNumber>
    </recommendedName>
    <alternativeName>
        <fullName evidence="1">UDP-MurNAc-pentapeptide phosphotransferase</fullName>
    </alternativeName>
</protein>
<gene>
    <name evidence="1" type="primary">mraY</name>
    <name type="ordered locus">BPP3755</name>
</gene>
<proteinExistence type="inferred from homology"/>
<sequence length="377" mass="41327">MRAIGVFEYITLRAVLACATALLIGLVAGPRVIRRLTEMKIGQAVRAYGPESHLVKTGTPTMGGALILIAIAISTLLWADWINRFVWVVLLVTFGFGWIGWMDDYRKVVYRDPEGMPARQKFFWQATIGLVAAVYLAFAVSAPANTELWPLFKAWVGSGFTMPLPTRADLIVPFFKSVSYPLGVLGFVALTWAVIVGTSNAVNLTDGLDGLAIMPTVMVGSALGIFAYVVGRVDYSKYLLFPYIPGAAELMVLCAAIGGAGLAFLWFNAYPAQVFMGDVGALALGGALGTIAVIVRQEIVLFIMGGVFVVETLSVMVQVTWFKYTKRKYGQGRRIFRMAPLHHHFEVGGWKETQVVVRFWIITMMLVLVGLSTLKLR</sequence>
<dbReference type="EC" id="2.7.8.13" evidence="1"/>
<dbReference type="EMBL" id="BX640434">
    <property type="protein sequence ID" value="CAE39038.1"/>
    <property type="molecule type" value="Genomic_DNA"/>
</dbReference>
<dbReference type="SMR" id="Q7W4B1"/>
<dbReference type="KEGG" id="bpa:BPP3755"/>
<dbReference type="HOGENOM" id="CLU_023982_0_0_4"/>
<dbReference type="UniPathway" id="UPA00219"/>
<dbReference type="Proteomes" id="UP000001421">
    <property type="component" value="Chromosome"/>
</dbReference>
<dbReference type="GO" id="GO:0005886">
    <property type="term" value="C:plasma membrane"/>
    <property type="evidence" value="ECO:0007669"/>
    <property type="project" value="UniProtKB-SubCell"/>
</dbReference>
<dbReference type="GO" id="GO:0046872">
    <property type="term" value="F:metal ion binding"/>
    <property type="evidence" value="ECO:0007669"/>
    <property type="project" value="UniProtKB-KW"/>
</dbReference>
<dbReference type="GO" id="GO:0008963">
    <property type="term" value="F:phospho-N-acetylmuramoyl-pentapeptide-transferase activity"/>
    <property type="evidence" value="ECO:0007669"/>
    <property type="project" value="UniProtKB-UniRule"/>
</dbReference>
<dbReference type="GO" id="GO:0051992">
    <property type="term" value="F:UDP-N-acetylmuramoyl-L-alanyl-D-glutamyl-meso-2,6-diaminopimelyl-D-alanyl-D-alanine:undecaprenyl-phosphate transferase activity"/>
    <property type="evidence" value="ECO:0007669"/>
    <property type="project" value="RHEA"/>
</dbReference>
<dbReference type="GO" id="GO:0051301">
    <property type="term" value="P:cell division"/>
    <property type="evidence" value="ECO:0007669"/>
    <property type="project" value="UniProtKB-KW"/>
</dbReference>
<dbReference type="GO" id="GO:0071555">
    <property type="term" value="P:cell wall organization"/>
    <property type="evidence" value="ECO:0007669"/>
    <property type="project" value="UniProtKB-KW"/>
</dbReference>
<dbReference type="GO" id="GO:0009252">
    <property type="term" value="P:peptidoglycan biosynthetic process"/>
    <property type="evidence" value="ECO:0007669"/>
    <property type="project" value="UniProtKB-UniRule"/>
</dbReference>
<dbReference type="GO" id="GO:0008360">
    <property type="term" value="P:regulation of cell shape"/>
    <property type="evidence" value="ECO:0007669"/>
    <property type="project" value="UniProtKB-KW"/>
</dbReference>
<dbReference type="CDD" id="cd06852">
    <property type="entry name" value="GT_MraY"/>
    <property type="match status" value="1"/>
</dbReference>
<dbReference type="HAMAP" id="MF_00038">
    <property type="entry name" value="MraY"/>
    <property type="match status" value="1"/>
</dbReference>
<dbReference type="InterPro" id="IPR000715">
    <property type="entry name" value="Glycosyl_transferase_4"/>
</dbReference>
<dbReference type="InterPro" id="IPR003524">
    <property type="entry name" value="PNAcMuramoyl-5peptid_Trfase"/>
</dbReference>
<dbReference type="InterPro" id="IPR018480">
    <property type="entry name" value="PNAcMuramoyl-5peptid_Trfase_CS"/>
</dbReference>
<dbReference type="NCBIfam" id="TIGR00445">
    <property type="entry name" value="mraY"/>
    <property type="match status" value="1"/>
</dbReference>
<dbReference type="PANTHER" id="PTHR22926">
    <property type="entry name" value="PHOSPHO-N-ACETYLMURAMOYL-PENTAPEPTIDE-TRANSFERASE"/>
    <property type="match status" value="1"/>
</dbReference>
<dbReference type="PANTHER" id="PTHR22926:SF5">
    <property type="entry name" value="PHOSPHO-N-ACETYLMURAMOYL-PENTAPEPTIDE-TRANSFERASE HOMOLOG"/>
    <property type="match status" value="1"/>
</dbReference>
<dbReference type="Pfam" id="PF00953">
    <property type="entry name" value="Glycos_transf_4"/>
    <property type="match status" value="1"/>
</dbReference>
<dbReference type="PROSITE" id="PS01347">
    <property type="entry name" value="MRAY_1"/>
    <property type="match status" value="1"/>
</dbReference>
<dbReference type="PROSITE" id="PS01348">
    <property type="entry name" value="MRAY_2"/>
    <property type="match status" value="1"/>
</dbReference>
<comment type="function">
    <text evidence="1">Catalyzes the initial step of the lipid cycle reactions in the biosynthesis of the cell wall peptidoglycan: transfers peptidoglycan precursor phospho-MurNAc-pentapeptide from UDP-MurNAc-pentapeptide onto the lipid carrier undecaprenyl phosphate, yielding undecaprenyl-pyrophosphoryl-MurNAc-pentapeptide, known as lipid I.</text>
</comment>
<comment type="catalytic activity">
    <reaction evidence="1">
        <text>UDP-N-acetyl-alpha-D-muramoyl-L-alanyl-gamma-D-glutamyl-meso-2,6-diaminopimeloyl-D-alanyl-D-alanine + di-trans,octa-cis-undecaprenyl phosphate = di-trans,octa-cis-undecaprenyl diphospho-N-acetyl-alpha-D-muramoyl-L-alanyl-D-glutamyl-meso-2,6-diaminopimeloyl-D-alanyl-D-alanine + UMP</text>
        <dbReference type="Rhea" id="RHEA:28386"/>
        <dbReference type="ChEBI" id="CHEBI:57865"/>
        <dbReference type="ChEBI" id="CHEBI:60392"/>
        <dbReference type="ChEBI" id="CHEBI:61386"/>
        <dbReference type="ChEBI" id="CHEBI:61387"/>
        <dbReference type="EC" id="2.7.8.13"/>
    </reaction>
</comment>
<comment type="cofactor">
    <cofactor evidence="1">
        <name>Mg(2+)</name>
        <dbReference type="ChEBI" id="CHEBI:18420"/>
    </cofactor>
</comment>
<comment type="pathway">
    <text evidence="1">Cell wall biogenesis; peptidoglycan biosynthesis.</text>
</comment>
<comment type="subcellular location">
    <subcellularLocation>
        <location evidence="1">Cell inner membrane</location>
        <topology evidence="1">Multi-pass membrane protein</topology>
    </subcellularLocation>
</comment>
<comment type="similarity">
    <text evidence="1">Belongs to the glycosyltransferase 4 family. MraY subfamily.</text>
</comment>